<organismHost>
    <name type="scientific">Homo sapiens</name>
    <name type="common">Human</name>
    <dbReference type="NCBI Taxonomy" id="9606"/>
</organismHost>
<protein>
    <recommendedName>
        <fullName>Phosphoprotein OPG062</fullName>
    </recommendedName>
    <alternativeName>
        <fullName>Phosphoprotein F17</fullName>
    </alternativeName>
</protein>
<name>PG062_VACCT</name>
<gene>
    <name type="primary">OPG062</name>
    <name type="ORF">TF17R</name>
</gene>
<keyword id="KW-0238">DNA-binding</keyword>
<keyword id="KW-0945">Host-virus interaction</keyword>
<keyword id="KW-1090">Inhibition of host innate immune response by virus</keyword>
<keyword id="KW-0426">Late protein</keyword>
<keyword id="KW-0597">Phosphoprotein</keyword>
<keyword id="KW-0899">Viral immunoevasion</keyword>
<keyword id="KW-0946">Virion</keyword>
<dbReference type="EMBL" id="M12698">
    <property type="protein sequence ID" value="AAA47960.1"/>
    <property type="molecule type" value="Genomic_DNA"/>
</dbReference>
<dbReference type="EMBL" id="AF095689">
    <property type="protein sequence ID" value="AAF33909.1"/>
    <property type="molecule type" value="Genomic_DNA"/>
</dbReference>
<dbReference type="PIR" id="A25726">
    <property type="entry name" value="WMVZ12"/>
</dbReference>
<dbReference type="DNASU" id="3707513"/>
<dbReference type="KEGG" id="vg:3707513"/>
<dbReference type="Proteomes" id="UP000163220">
    <property type="component" value="Genome"/>
</dbReference>
<dbReference type="GO" id="GO:0044423">
    <property type="term" value="C:virion component"/>
    <property type="evidence" value="ECO:0007669"/>
    <property type="project" value="UniProtKB-KW"/>
</dbReference>
<dbReference type="GO" id="GO:0003677">
    <property type="term" value="F:DNA binding"/>
    <property type="evidence" value="ECO:0007669"/>
    <property type="project" value="UniProtKB-KW"/>
</dbReference>
<dbReference type="GO" id="GO:0052170">
    <property type="term" value="P:symbiont-mediated suppression of host innate immune response"/>
    <property type="evidence" value="ECO:0007669"/>
    <property type="project" value="UniProtKB-KW"/>
</dbReference>
<dbReference type="GO" id="GO:0019082">
    <property type="term" value="P:viral protein processing"/>
    <property type="evidence" value="ECO:0007669"/>
    <property type="project" value="InterPro"/>
</dbReference>
<dbReference type="InterPro" id="IPR006854">
    <property type="entry name" value="Phosphoprotein_F17"/>
</dbReference>
<dbReference type="Pfam" id="PF04767">
    <property type="entry name" value="Pox_F17"/>
    <property type="match status" value="1"/>
</dbReference>
<dbReference type="PIRSF" id="PIRSF003688">
    <property type="entry name" value="VAC_PP"/>
    <property type="match status" value="1"/>
</dbReference>
<feature type="chain" id="PRO_0000099519" description="Phosphoprotein OPG062">
    <location>
        <begin position="1"/>
        <end position="101"/>
    </location>
</feature>
<feature type="region of interest" description="Disordered" evidence="2">
    <location>
        <begin position="51"/>
        <end position="73"/>
    </location>
</feature>
<feature type="compositionally biased region" description="Basic and acidic residues" evidence="2">
    <location>
        <begin position="56"/>
        <end position="68"/>
    </location>
</feature>
<feature type="modified residue" description="Phosphoserine" evidence="1">
    <location>
        <position position="53"/>
    </location>
</feature>
<feature type="modified residue" description="Phosphoserine" evidence="1">
    <location>
        <position position="62"/>
    </location>
</feature>
<organism>
    <name type="scientific">Vaccinia virus (strain Tian Tan)</name>
    <name type="common">VACV</name>
    <dbReference type="NCBI Taxonomy" id="10253"/>
    <lineage>
        <taxon>Viruses</taxon>
        <taxon>Varidnaviria</taxon>
        <taxon>Bamfordvirae</taxon>
        <taxon>Nucleocytoviricota</taxon>
        <taxon>Pokkesviricetes</taxon>
        <taxon>Chitovirales</taxon>
        <taxon>Poxviridae</taxon>
        <taxon>Chordopoxvirinae</taxon>
        <taxon>Orthopoxvirus</taxon>
        <taxon>Vaccinia virus</taxon>
    </lineage>
</organism>
<proteinExistence type="inferred from homology"/>
<comment type="function">
    <text evidence="1">Plays an essential role in virion assembly and morphogenesis. Also plays a role in the inhibition of host immune response by dysregulating mTOR. Sequesters host RICTOR and RPTOR, thereby disrupting mTORC1 and mTORC2 crosstalk. In turn, blocks the host antiviral response in part through mTOR-dependent degradation of cGAS, the primary poxvirus sensor.</text>
</comment>
<comment type="subunit">
    <text evidence="1">Self-associates to form high molecular-weight forms. Interacts with protein OPG157. Interacts with host RICTOR and RPTOR; these interactions disrupt the mTORC1 and mTORC2 crosstalk.</text>
</comment>
<comment type="subcellular location">
    <subcellularLocation>
        <location evidence="1">Virion</location>
    </subcellularLocation>
    <text evidence="1">Major component of the virion comprising about 10% of the virion mass.</text>
</comment>
<comment type="PTM">
    <text evidence="1">Phosphorylated on two serines. While these phosphorylations do not play a role in virion assembly; they are essential for the interaction with host RICTOR and RPTOR.</text>
</comment>
<comment type="miscellaneous">
    <text evidence="1">Originally annotated as the product of the F18R open reading frame (protein F18), it is now referred as protein F17 since there are only 17 open reading frames in the HindIII fragment.</text>
</comment>
<comment type="similarity">
    <text evidence="3">Belongs to the orthopoxvirus OPG062 family.</text>
</comment>
<sequence>MNSHFASAHTPFYINTKEGRYLVLKAVKVCDVRTVECEGSKASCVLKVDKPSSPACERRPSSPSRCERMNNPGKQVPFMRTDMLQNMFAANRDNVASRLLN</sequence>
<accession>P68455</accession>
<accession>P07397</accession>
<evidence type="ECO:0000250" key="1">
    <source>
        <dbReference type="UniProtKB" id="P07396"/>
    </source>
</evidence>
<evidence type="ECO:0000256" key="2">
    <source>
        <dbReference type="SAM" id="MobiDB-lite"/>
    </source>
</evidence>
<evidence type="ECO:0000305" key="3"/>
<reference key="1">
    <citation type="journal article" date="1986" name="J. Virol.">
        <title>Gene coding for the late 11,000-dalton polypeptide of the Tian Tan strain of vaccinia virus and its 5'-flanking region: nucleotide sequence.</title>
        <authorList>
            <person name="Tsao H."/>
            <person name="Ren G.-F."/>
            <person name="Chu C.-M."/>
        </authorList>
    </citation>
    <scope>NUCLEOTIDE SEQUENCE [GENOMIC DNA]</scope>
</reference>
<reference key="2">
    <citation type="submission" date="1998-09" db="EMBL/GenBank/DDBJ databases">
        <title>Complete genomic sequence of vaccinia virus (Tian Tan strain).</title>
        <authorList>
            <person name="Jin Q."/>
            <person name="Hou Y.D."/>
            <person name="Cheng N.H."/>
            <person name="Yao E.M."/>
            <person name="Cheng S.X."/>
            <person name="Yang X.K."/>
            <person name="Jing D.Y."/>
            <person name="Yu W.H."/>
            <person name="Yuan J.S."/>
            <person name="Ma X.J."/>
        </authorList>
    </citation>
    <scope>NUCLEOTIDE SEQUENCE [LARGE SCALE GENOMIC DNA]</scope>
</reference>